<keyword id="KW-0342">GTP-binding</keyword>
<keyword id="KW-0378">Hydrolase</keyword>
<keyword id="KW-0479">Metal-binding</keyword>
<keyword id="KW-0547">Nucleotide-binding</keyword>
<keyword id="KW-0686">Riboflavin biosynthesis</keyword>
<keyword id="KW-0862">Zinc</keyword>
<proteinExistence type="inferred from homology"/>
<feature type="chain" id="PRO_1000040561" description="GTP cyclohydrolase-2">
    <location>
        <begin position="1"/>
        <end position="196"/>
    </location>
</feature>
<feature type="active site" description="Proton acceptor" evidence="1">
    <location>
        <position position="126"/>
    </location>
</feature>
<feature type="active site" description="Nucleophile" evidence="1">
    <location>
        <position position="128"/>
    </location>
</feature>
<feature type="binding site" evidence="1">
    <location>
        <begin position="49"/>
        <end position="53"/>
    </location>
    <ligand>
        <name>GTP</name>
        <dbReference type="ChEBI" id="CHEBI:37565"/>
    </ligand>
</feature>
<feature type="binding site" evidence="1">
    <location>
        <position position="54"/>
    </location>
    <ligand>
        <name>Zn(2+)</name>
        <dbReference type="ChEBI" id="CHEBI:29105"/>
        <note>catalytic</note>
    </ligand>
</feature>
<feature type="binding site" evidence="1">
    <location>
        <position position="65"/>
    </location>
    <ligand>
        <name>Zn(2+)</name>
        <dbReference type="ChEBI" id="CHEBI:29105"/>
        <note>catalytic</note>
    </ligand>
</feature>
<feature type="binding site" evidence="1">
    <location>
        <position position="67"/>
    </location>
    <ligand>
        <name>Zn(2+)</name>
        <dbReference type="ChEBI" id="CHEBI:29105"/>
        <note>catalytic</note>
    </ligand>
</feature>
<feature type="binding site" evidence="1">
    <location>
        <position position="70"/>
    </location>
    <ligand>
        <name>GTP</name>
        <dbReference type="ChEBI" id="CHEBI:37565"/>
    </ligand>
</feature>
<feature type="binding site" evidence="1">
    <location>
        <begin position="92"/>
        <end position="94"/>
    </location>
    <ligand>
        <name>GTP</name>
        <dbReference type="ChEBI" id="CHEBI:37565"/>
    </ligand>
</feature>
<feature type="binding site" evidence="1">
    <location>
        <position position="114"/>
    </location>
    <ligand>
        <name>GTP</name>
        <dbReference type="ChEBI" id="CHEBI:37565"/>
    </ligand>
</feature>
<feature type="binding site" evidence="1">
    <location>
        <position position="149"/>
    </location>
    <ligand>
        <name>GTP</name>
        <dbReference type="ChEBI" id="CHEBI:37565"/>
    </ligand>
</feature>
<feature type="binding site" evidence="1">
    <location>
        <position position="154"/>
    </location>
    <ligand>
        <name>GTP</name>
        <dbReference type="ChEBI" id="CHEBI:37565"/>
    </ligand>
</feature>
<comment type="function">
    <text evidence="1">Catalyzes the conversion of GTP to 2,5-diamino-6-ribosylamino-4(3H)-pyrimidinone 5'-phosphate (DARP), formate and pyrophosphate.</text>
</comment>
<comment type="catalytic activity">
    <reaction evidence="1">
        <text>GTP + 4 H2O = 2,5-diamino-6-hydroxy-4-(5-phosphoribosylamino)-pyrimidine + formate + 2 phosphate + 3 H(+)</text>
        <dbReference type="Rhea" id="RHEA:23704"/>
        <dbReference type="ChEBI" id="CHEBI:15377"/>
        <dbReference type="ChEBI" id="CHEBI:15378"/>
        <dbReference type="ChEBI" id="CHEBI:15740"/>
        <dbReference type="ChEBI" id="CHEBI:37565"/>
        <dbReference type="ChEBI" id="CHEBI:43474"/>
        <dbReference type="ChEBI" id="CHEBI:58614"/>
        <dbReference type="EC" id="3.5.4.25"/>
    </reaction>
</comment>
<comment type="cofactor">
    <cofactor evidence="1">
        <name>Zn(2+)</name>
        <dbReference type="ChEBI" id="CHEBI:29105"/>
    </cofactor>
    <text evidence="1">Binds 1 zinc ion per subunit.</text>
</comment>
<comment type="pathway">
    <text evidence="1">Cofactor biosynthesis; riboflavin biosynthesis; 5-amino-6-(D-ribitylamino)uracil from GTP: step 1/4.</text>
</comment>
<comment type="subunit">
    <text evidence="1">Homodimer.</text>
</comment>
<comment type="similarity">
    <text evidence="1">Belongs to the GTP cyclohydrolase II family.</text>
</comment>
<protein>
    <recommendedName>
        <fullName evidence="1">GTP cyclohydrolase-2</fullName>
        <ecNumber evidence="1">3.5.4.25</ecNumber>
    </recommendedName>
    <alternativeName>
        <fullName evidence="1">GTP cyclohydrolase II</fullName>
    </alternativeName>
</protein>
<dbReference type="EC" id="3.5.4.25" evidence="1"/>
<dbReference type="EMBL" id="CP000247">
    <property type="protein sequence ID" value="ABG69341.1"/>
    <property type="molecule type" value="Genomic_DNA"/>
</dbReference>
<dbReference type="RefSeq" id="WP_001176294.1">
    <property type="nucleotide sequence ID" value="NC_008253.1"/>
</dbReference>
<dbReference type="SMR" id="Q0TI88"/>
<dbReference type="KEGG" id="ecp:ECP_1330"/>
<dbReference type="HOGENOM" id="CLU_020273_2_1_6"/>
<dbReference type="UniPathway" id="UPA00275">
    <property type="reaction ID" value="UER00400"/>
</dbReference>
<dbReference type="Proteomes" id="UP000009182">
    <property type="component" value="Chromosome"/>
</dbReference>
<dbReference type="GO" id="GO:0005829">
    <property type="term" value="C:cytosol"/>
    <property type="evidence" value="ECO:0007669"/>
    <property type="project" value="TreeGrafter"/>
</dbReference>
<dbReference type="GO" id="GO:0005525">
    <property type="term" value="F:GTP binding"/>
    <property type="evidence" value="ECO:0007669"/>
    <property type="project" value="UniProtKB-KW"/>
</dbReference>
<dbReference type="GO" id="GO:0003935">
    <property type="term" value="F:GTP cyclohydrolase II activity"/>
    <property type="evidence" value="ECO:0007669"/>
    <property type="project" value="UniProtKB-UniRule"/>
</dbReference>
<dbReference type="GO" id="GO:0008270">
    <property type="term" value="F:zinc ion binding"/>
    <property type="evidence" value="ECO:0007669"/>
    <property type="project" value="UniProtKB-UniRule"/>
</dbReference>
<dbReference type="GO" id="GO:0009231">
    <property type="term" value="P:riboflavin biosynthetic process"/>
    <property type="evidence" value="ECO:0007669"/>
    <property type="project" value="UniProtKB-UniRule"/>
</dbReference>
<dbReference type="CDD" id="cd00641">
    <property type="entry name" value="GTP_cyclohydro2"/>
    <property type="match status" value="1"/>
</dbReference>
<dbReference type="FunFam" id="3.40.50.10990:FF:000002">
    <property type="entry name" value="GTP cyclohydrolase-2"/>
    <property type="match status" value="1"/>
</dbReference>
<dbReference type="Gene3D" id="3.40.50.10990">
    <property type="entry name" value="GTP cyclohydrolase II"/>
    <property type="match status" value="1"/>
</dbReference>
<dbReference type="HAMAP" id="MF_00179">
    <property type="entry name" value="RibA"/>
    <property type="match status" value="1"/>
</dbReference>
<dbReference type="InterPro" id="IPR032677">
    <property type="entry name" value="GTP_cyclohydro_II"/>
</dbReference>
<dbReference type="InterPro" id="IPR000926">
    <property type="entry name" value="RibA"/>
</dbReference>
<dbReference type="InterPro" id="IPR036144">
    <property type="entry name" value="RibA-like_sf"/>
</dbReference>
<dbReference type="NCBIfam" id="NF001591">
    <property type="entry name" value="PRK00393.1"/>
    <property type="match status" value="1"/>
</dbReference>
<dbReference type="NCBIfam" id="TIGR00505">
    <property type="entry name" value="ribA"/>
    <property type="match status" value="1"/>
</dbReference>
<dbReference type="PANTHER" id="PTHR21327:SF18">
    <property type="entry name" value="3,4-DIHYDROXY-2-BUTANONE 4-PHOSPHATE SYNTHASE"/>
    <property type="match status" value="1"/>
</dbReference>
<dbReference type="PANTHER" id="PTHR21327">
    <property type="entry name" value="GTP CYCLOHYDROLASE II-RELATED"/>
    <property type="match status" value="1"/>
</dbReference>
<dbReference type="Pfam" id="PF00925">
    <property type="entry name" value="GTP_cyclohydro2"/>
    <property type="match status" value="1"/>
</dbReference>
<dbReference type="SUPFAM" id="SSF142695">
    <property type="entry name" value="RibA-like"/>
    <property type="match status" value="1"/>
</dbReference>
<accession>Q0TI88</accession>
<sequence length="196" mass="21850">MQLKRVAEAKLPTPWGDFLMVGFEELATGHDHVALVYGDISGHTPVLARVHSECLTGDALFSLRCDCGFQLEAALTQIAEEGRGILLYHRQEGRNIGLLNKIRAYALQDQGYDTVEANHQLGFAADERDFTLCADMFKLLGVNEVRLLTNNPKKVEILTEAGINIIERVPLIVGRNPNNEHYLDTKAEKMGHLLNK</sequence>
<gene>
    <name evidence="1" type="primary">ribA</name>
    <name type="ordered locus">ECP_1330</name>
</gene>
<evidence type="ECO:0000255" key="1">
    <source>
        <dbReference type="HAMAP-Rule" id="MF_00179"/>
    </source>
</evidence>
<organism>
    <name type="scientific">Escherichia coli O6:K15:H31 (strain 536 / UPEC)</name>
    <dbReference type="NCBI Taxonomy" id="362663"/>
    <lineage>
        <taxon>Bacteria</taxon>
        <taxon>Pseudomonadati</taxon>
        <taxon>Pseudomonadota</taxon>
        <taxon>Gammaproteobacteria</taxon>
        <taxon>Enterobacterales</taxon>
        <taxon>Enterobacteriaceae</taxon>
        <taxon>Escherichia</taxon>
    </lineage>
</organism>
<name>RIBA_ECOL5</name>
<reference key="1">
    <citation type="journal article" date="2006" name="Mol. Microbiol.">
        <title>Role of pathogenicity island-associated integrases in the genome plasticity of uropathogenic Escherichia coli strain 536.</title>
        <authorList>
            <person name="Hochhut B."/>
            <person name="Wilde C."/>
            <person name="Balling G."/>
            <person name="Middendorf B."/>
            <person name="Dobrindt U."/>
            <person name="Brzuszkiewicz E."/>
            <person name="Gottschalk G."/>
            <person name="Carniel E."/>
            <person name="Hacker J."/>
        </authorList>
    </citation>
    <scope>NUCLEOTIDE SEQUENCE [LARGE SCALE GENOMIC DNA]</scope>
    <source>
        <strain>536 / UPEC</strain>
    </source>
</reference>